<feature type="chain" id="PRO_1000185412" description="Tagatose-6-phosphate kinase">
    <location>
        <begin position="1"/>
        <end position="309"/>
    </location>
</feature>
<protein>
    <recommendedName>
        <fullName evidence="1">Tagatose-6-phosphate kinase</fullName>
        <ecNumber evidence="1">2.7.1.144</ecNumber>
    </recommendedName>
    <alternativeName>
        <fullName evidence="1">Phosphotagatokinase</fullName>
    </alternativeName>
</protein>
<evidence type="ECO:0000255" key="1">
    <source>
        <dbReference type="HAMAP-Rule" id="MF_01557"/>
    </source>
</evidence>
<name>LACC_STRZP</name>
<keyword id="KW-0067">ATP-binding</keyword>
<keyword id="KW-0418">Kinase</keyword>
<keyword id="KW-0423">Lactose metabolism</keyword>
<keyword id="KW-0547">Nucleotide-binding</keyword>
<keyword id="KW-0808">Transferase</keyword>
<dbReference type="EC" id="2.7.1.144" evidence="1"/>
<dbReference type="EMBL" id="CP000920">
    <property type="protein sequence ID" value="ACO21125.1"/>
    <property type="molecule type" value="Genomic_DNA"/>
</dbReference>
<dbReference type="RefSeq" id="WP_000604269.1">
    <property type="nucleotide sequence ID" value="NC_012467.1"/>
</dbReference>
<dbReference type="SMR" id="C1CKT7"/>
<dbReference type="KEGG" id="spp:SPP_1232"/>
<dbReference type="HOGENOM" id="CLU_050013_5_0_9"/>
<dbReference type="UniPathway" id="UPA00704">
    <property type="reaction ID" value="UER00715"/>
</dbReference>
<dbReference type="GO" id="GO:0005829">
    <property type="term" value="C:cytosol"/>
    <property type="evidence" value="ECO:0007669"/>
    <property type="project" value="TreeGrafter"/>
</dbReference>
<dbReference type="GO" id="GO:0005524">
    <property type="term" value="F:ATP binding"/>
    <property type="evidence" value="ECO:0007669"/>
    <property type="project" value="UniProtKB-KW"/>
</dbReference>
<dbReference type="GO" id="GO:0008443">
    <property type="term" value="F:phosphofructokinase activity"/>
    <property type="evidence" value="ECO:0007669"/>
    <property type="project" value="TreeGrafter"/>
</dbReference>
<dbReference type="GO" id="GO:0009024">
    <property type="term" value="F:tagatose-6-phosphate kinase activity"/>
    <property type="evidence" value="ECO:0007669"/>
    <property type="project" value="UniProtKB-UniRule"/>
</dbReference>
<dbReference type="GO" id="GO:2001059">
    <property type="term" value="P:D-tagatose 6-phosphate catabolic process"/>
    <property type="evidence" value="ECO:0007669"/>
    <property type="project" value="UniProtKB-UniRule"/>
</dbReference>
<dbReference type="GO" id="GO:0019512">
    <property type="term" value="P:lactose catabolic process via tagatose-6-phosphate"/>
    <property type="evidence" value="ECO:0007669"/>
    <property type="project" value="InterPro"/>
</dbReference>
<dbReference type="CDD" id="cd01164">
    <property type="entry name" value="FruK_PfkB_like"/>
    <property type="match status" value="1"/>
</dbReference>
<dbReference type="FunFam" id="3.40.1190.20:FF:000001">
    <property type="entry name" value="Phosphofructokinase"/>
    <property type="match status" value="1"/>
</dbReference>
<dbReference type="Gene3D" id="3.40.1190.20">
    <property type="match status" value="1"/>
</dbReference>
<dbReference type="HAMAP" id="MF_01557">
    <property type="entry name" value="LacC"/>
    <property type="match status" value="1"/>
</dbReference>
<dbReference type="InterPro" id="IPR002173">
    <property type="entry name" value="Carboh/pur_kinase_PfkB_CS"/>
</dbReference>
<dbReference type="InterPro" id="IPR005926">
    <property type="entry name" value="LacC"/>
</dbReference>
<dbReference type="InterPro" id="IPR011611">
    <property type="entry name" value="PfkB_dom"/>
</dbReference>
<dbReference type="InterPro" id="IPR029056">
    <property type="entry name" value="Ribokinase-like"/>
</dbReference>
<dbReference type="InterPro" id="IPR017583">
    <property type="entry name" value="Tagatose/fructose_Pkinase"/>
</dbReference>
<dbReference type="NCBIfam" id="TIGR03168">
    <property type="entry name" value="1-PFK"/>
    <property type="match status" value="1"/>
</dbReference>
<dbReference type="NCBIfam" id="TIGR01231">
    <property type="entry name" value="lacC"/>
    <property type="match status" value="1"/>
</dbReference>
<dbReference type="NCBIfam" id="NF010033">
    <property type="entry name" value="PRK13508.1"/>
    <property type="match status" value="1"/>
</dbReference>
<dbReference type="PANTHER" id="PTHR46566:SF5">
    <property type="entry name" value="1-PHOSPHOFRUCTOKINASE"/>
    <property type="match status" value="1"/>
</dbReference>
<dbReference type="PANTHER" id="PTHR46566">
    <property type="entry name" value="1-PHOSPHOFRUCTOKINASE-RELATED"/>
    <property type="match status" value="1"/>
</dbReference>
<dbReference type="Pfam" id="PF00294">
    <property type="entry name" value="PfkB"/>
    <property type="match status" value="1"/>
</dbReference>
<dbReference type="PIRSF" id="PIRSF000535">
    <property type="entry name" value="1PFK/6PFK/LacC"/>
    <property type="match status" value="1"/>
</dbReference>
<dbReference type="SUPFAM" id="SSF53613">
    <property type="entry name" value="Ribokinase-like"/>
    <property type="match status" value="1"/>
</dbReference>
<dbReference type="PROSITE" id="PS00583">
    <property type="entry name" value="PFKB_KINASES_1"/>
    <property type="match status" value="1"/>
</dbReference>
<dbReference type="PROSITE" id="PS00584">
    <property type="entry name" value="PFKB_KINASES_2"/>
    <property type="match status" value="1"/>
</dbReference>
<accession>C1CKT7</accession>
<proteinExistence type="inferred from homology"/>
<reference key="1">
    <citation type="journal article" date="2010" name="Genome Biol.">
        <title>Structure and dynamics of the pan-genome of Streptococcus pneumoniae and closely related species.</title>
        <authorList>
            <person name="Donati C."/>
            <person name="Hiller N.L."/>
            <person name="Tettelin H."/>
            <person name="Muzzi A."/>
            <person name="Croucher N.J."/>
            <person name="Angiuoli S.V."/>
            <person name="Oggioni M."/>
            <person name="Dunning Hotopp J.C."/>
            <person name="Hu F.Z."/>
            <person name="Riley D.R."/>
            <person name="Covacci A."/>
            <person name="Mitchell T.J."/>
            <person name="Bentley S.D."/>
            <person name="Kilian M."/>
            <person name="Ehrlich G.D."/>
            <person name="Rappuoli R."/>
            <person name="Moxon E.R."/>
            <person name="Masignani V."/>
        </authorList>
    </citation>
    <scope>NUCLEOTIDE SEQUENCE [LARGE SCALE GENOMIC DNA]</scope>
    <source>
        <strain>P1031</strain>
    </source>
</reference>
<comment type="catalytic activity">
    <reaction evidence="1">
        <text>D-tagatofuranose 6-phosphate + ATP = D-tagatofuranose 1,6-bisphosphate + ADP + H(+)</text>
        <dbReference type="Rhea" id="RHEA:12420"/>
        <dbReference type="ChEBI" id="CHEBI:15378"/>
        <dbReference type="ChEBI" id="CHEBI:30616"/>
        <dbReference type="ChEBI" id="CHEBI:58694"/>
        <dbReference type="ChEBI" id="CHEBI:58695"/>
        <dbReference type="ChEBI" id="CHEBI:456216"/>
        <dbReference type="EC" id="2.7.1.144"/>
    </reaction>
</comment>
<comment type="pathway">
    <text evidence="1">Carbohydrate metabolism; D-tagatose 6-phosphate degradation; D-glyceraldehyde 3-phosphate and glycerone phosphate from D-tagatose 6-phosphate: step 1/2.</text>
</comment>
<comment type="similarity">
    <text evidence="1">Belongs to the carbohydrate kinase PfkB family. LacC subfamily.</text>
</comment>
<gene>
    <name evidence="1" type="primary">lacC</name>
    <name type="ordered locus">SPP_1232</name>
</gene>
<sequence length="309" mass="33328">MILTVTMNPSIDISYPLDELKIDTVNRVVDVTKTAGGKGLNVTRVLSEFGDSVLATGLVGGKLGEFLVEHIDNQVKKDFFSIQGETRNCIAILHGDNQTEVLEKGPEVLEQEGQDFLEHFKKLLESVEVVAISGSLPAGLPVDYCASLVELANQAGKPVVLDCSGAALQAVLESPHKPTVIKPNNEELSQLLGREVSEDLDELKEVLQEPLFAGIEWIIVSLGANGTFTKHGDTFYKVDIPRIQAVNPVGSGDSTVAGISSGLLHKESDAELLIKANVLGMLNAQEKMTGHVNMANYQALYDQLIVKEV</sequence>
<organism>
    <name type="scientific">Streptococcus pneumoniae (strain P1031)</name>
    <dbReference type="NCBI Taxonomy" id="488223"/>
    <lineage>
        <taxon>Bacteria</taxon>
        <taxon>Bacillati</taxon>
        <taxon>Bacillota</taxon>
        <taxon>Bacilli</taxon>
        <taxon>Lactobacillales</taxon>
        <taxon>Streptococcaceae</taxon>
        <taxon>Streptococcus</taxon>
    </lineage>
</organism>